<feature type="chain" id="PRO_1000002438" description="Holliday junction branch migration complex subunit RuvA">
    <location>
        <begin position="1"/>
        <end position="198"/>
    </location>
</feature>
<feature type="region of interest" description="Domain I" evidence="1">
    <location>
        <begin position="1"/>
        <end position="63"/>
    </location>
</feature>
<feature type="region of interest" description="Domain II" evidence="1">
    <location>
        <begin position="64"/>
        <end position="142"/>
    </location>
</feature>
<feature type="region of interest" description="Flexible linker" evidence="1">
    <location>
        <begin position="143"/>
        <end position="150"/>
    </location>
</feature>
<feature type="region of interest" description="Domain III" evidence="1">
    <location>
        <begin position="150"/>
        <end position="198"/>
    </location>
</feature>
<proteinExistence type="inferred from homology"/>
<organism>
    <name type="scientific">Deinococcus geothermalis (strain DSM 11300 / CIP 105573 / AG-3a)</name>
    <dbReference type="NCBI Taxonomy" id="319795"/>
    <lineage>
        <taxon>Bacteria</taxon>
        <taxon>Thermotogati</taxon>
        <taxon>Deinococcota</taxon>
        <taxon>Deinococci</taxon>
        <taxon>Deinococcales</taxon>
        <taxon>Deinococcaceae</taxon>
        <taxon>Deinococcus</taxon>
    </lineage>
</organism>
<gene>
    <name evidence="1" type="primary">ruvA</name>
    <name type="ordered locus">Dgeo_0726</name>
</gene>
<reference key="1">
    <citation type="submission" date="2006-04" db="EMBL/GenBank/DDBJ databases">
        <title>Complete sequence of chromosome of Deinococcus geothermalis DSM 11300.</title>
        <authorList>
            <person name="Copeland A."/>
            <person name="Lucas S."/>
            <person name="Lapidus A."/>
            <person name="Barry K."/>
            <person name="Detter J.C."/>
            <person name="Glavina del Rio T."/>
            <person name="Hammon N."/>
            <person name="Israni S."/>
            <person name="Dalin E."/>
            <person name="Tice H."/>
            <person name="Pitluck S."/>
            <person name="Brettin T."/>
            <person name="Bruce D."/>
            <person name="Han C."/>
            <person name="Tapia R."/>
            <person name="Saunders E."/>
            <person name="Gilna P."/>
            <person name="Schmutz J."/>
            <person name="Larimer F."/>
            <person name="Land M."/>
            <person name="Hauser L."/>
            <person name="Kyrpides N."/>
            <person name="Kim E."/>
            <person name="Daly M.J."/>
            <person name="Fredrickson J.K."/>
            <person name="Makarova K.S."/>
            <person name="Gaidamakova E.K."/>
            <person name="Zhai M."/>
            <person name="Richardson P."/>
        </authorList>
    </citation>
    <scope>NUCLEOTIDE SEQUENCE [LARGE SCALE GENOMIC DNA]</scope>
    <source>
        <strain>DSM 11300 / CIP 105573 / AG-3a</strain>
    </source>
</reference>
<accession>Q1J0F6</accession>
<sequence>MIAYLSGAVREVREASAVIVAGGVGYEVFCPASTLGRLVPGQPAELNIRHVVREDAQLLFGFLDTDSLRLFDLLIGVSGVGPKLALSLLSALPVTAVAQGLLSGDVKLLSSVSGVGKKTAERLVLELQNKVPEHLAAGAPVSAGKAALTSTAGRDAIEALLALGFREPQVRSVVAELLAADPEQSADALIRKGLGKLR</sequence>
<name>RUVA_DEIGD</name>
<keyword id="KW-0963">Cytoplasm</keyword>
<keyword id="KW-0227">DNA damage</keyword>
<keyword id="KW-0233">DNA recombination</keyword>
<keyword id="KW-0234">DNA repair</keyword>
<keyword id="KW-0238">DNA-binding</keyword>
<protein>
    <recommendedName>
        <fullName evidence="1">Holliday junction branch migration complex subunit RuvA</fullName>
    </recommendedName>
</protein>
<dbReference type="EMBL" id="CP000359">
    <property type="protein sequence ID" value="ABF45028.1"/>
    <property type="molecule type" value="Genomic_DNA"/>
</dbReference>
<dbReference type="RefSeq" id="WP_011529869.1">
    <property type="nucleotide sequence ID" value="NC_008025.1"/>
</dbReference>
<dbReference type="SMR" id="Q1J0F6"/>
<dbReference type="STRING" id="319795.Dgeo_0726"/>
<dbReference type="KEGG" id="dge:Dgeo_0726"/>
<dbReference type="eggNOG" id="COG0632">
    <property type="taxonomic scope" value="Bacteria"/>
</dbReference>
<dbReference type="HOGENOM" id="CLU_087936_2_1_0"/>
<dbReference type="Proteomes" id="UP000002431">
    <property type="component" value="Chromosome"/>
</dbReference>
<dbReference type="GO" id="GO:0005737">
    <property type="term" value="C:cytoplasm"/>
    <property type="evidence" value="ECO:0007669"/>
    <property type="project" value="UniProtKB-SubCell"/>
</dbReference>
<dbReference type="GO" id="GO:0009379">
    <property type="term" value="C:Holliday junction helicase complex"/>
    <property type="evidence" value="ECO:0007669"/>
    <property type="project" value="InterPro"/>
</dbReference>
<dbReference type="GO" id="GO:0048476">
    <property type="term" value="C:Holliday junction resolvase complex"/>
    <property type="evidence" value="ECO:0007669"/>
    <property type="project" value="UniProtKB-UniRule"/>
</dbReference>
<dbReference type="GO" id="GO:0005524">
    <property type="term" value="F:ATP binding"/>
    <property type="evidence" value="ECO:0007669"/>
    <property type="project" value="InterPro"/>
</dbReference>
<dbReference type="GO" id="GO:0000400">
    <property type="term" value="F:four-way junction DNA binding"/>
    <property type="evidence" value="ECO:0007669"/>
    <property type="project" value="UniProtKB-UniRule"/>
</dbReference>
<dbReference type="GO" id="GO:0009378">
    <property type="term" value="F:four-way junction helicase activity"/>
    <property type="evidence" value="ECO:0007669"/>
    <property type="project" value="InterPro"/>
</dbReference>
<dbReference type="GO" id="GO:0006310">
    <property type="term" value="P:DNA recombination"/>
    <property type="evidence" value="ECO:0007669"/>
    <property type="project" value="UniProtKB-UniRule"/>
</dbReference>
<dbReference type="GO" id="GO:0006281">
    <property type="term" value="P:DNA repair"/>
    <property type="evidence" value="ECO:0007669"/>
    <property type="project" value="UniProtKB-UniRule"/>
</dbReference>
<dbReference type="CDD" id="cd14332">
    <property type="entry name" value="UBA_RuvA_C"/>
    <property type="match status" value="1"/>
</dbReference>
<dbReference type="Gene3D" id="1.10.150.20">
    <property type="entry name" value="5' to 3' exonuclease, C-terminal subdomain"/>
    <property type="match status" value="1"/>
</dbReference>
<dbReference type="Gene3D" id="1.10.8.10">
    <property type="entry name" value="DNA helicase RuvA subunit, C-terminal domain"/>
    <property type="match status" value="1"/>
</dbReference>
<dbReference type="Gene3D" id="2.40.50.140">
    <property type="entry name" value="Nucleic acid-binding proteins"/>
    <property type="match status" value="1"/>
</dbReference>
<dbReference type="HAMAP" id="MF_00031">
    <property type="entry name" value="DNA_HJ_migration_RuvA"/>
    <property type="match status" value="1"/>
</dbReference>
<dbReference type="InterPro" id="IPR013849">
    <property type="entry name" value="DNA_helicase_Holl-junc_RuvA_I"/>
</dbReference>
<dbReference type="InterPro" id="IPR003583">
    <property type="entry name" value="Hlx-hairpin-Hlx_DNA-bd_motif"/>
</dbReference>
<dbReference type="InterPro" id="IPR012340">
    <property type="entry name" value="NA-bd_OB-fold"/>
</dbReference>
<dbReference type="InterPro" id="IPR000085">
    <property type="entry name" value="RuvA"/>
</dbReference>
<dbReference type="InterPro" id="IPR010994">
    <property type="entry name" value="RuvA_2-like"/>
</dbReference>
<dbReference type="InterPro" id="IPR011114">
    <property type="entry name" value="RuvA_C"/>
</dbReference>
<dbReference type="InterPro" id="IPR036267">
    <property type="entry name" value="RuvA_C_sf"/>
</dbReference>
<dbReference type="NCBIfam" id="TIGR00084">
    <property type="entry name" value="ruvA"/>
    <property type="match status" value="1"/>
</dbReference>
<dbReference type="Pfam" id="PF14520">
    <property type="entry name" value="HHH_5"/>
    <property type="match status" value="1"/>
</dbReference>
<dbReference type="Pfam" id="PF07499">
    <property type="entry name" value="RuvA_C"/>
    <property type="match status" value="1"/>
</dbReference>
<dbReference type="Pfam" id="PF01330">
    <property type="entry name" value="RuvA_N"/>
    <property type="match status" value="1"/>
</dbReference>
<dbReference type="SMART" id="SM00278">
    <property type="entry name" value="HhH1"/>
    <property type="match status" value="2"/>
</dbReference>
<dbReference type="SUPFAM" id="SSF46929">
    <property type="entry name" value="DNA helicase RuvA subunit, C-terminal domain"/>
    <property type="match status" value="1"/>
</dbReference>
<dbReference type="SUPFAM" id="SSF50249">
    <property type="entry name" value="Nucleic acid-binding proteins"/>
    <property type="match status" value="1"/>
</dbReference>
<dbReference type="SUPFAM" id="SSF47781">
    <property type="entry name" value="RuvA domain 2-like"/>
    <property type="match status" value="1"/>
</dbReference>
<comment type="function">
    <text evidence="1">The RuvA-RuvB-RuvC complex processes Holliday junction (HJ) DNA during genetic recombination and DNA repair, while the RuvA-RuvB complex plays an important role in the rescue of blocked DNA replication forks via replication fork reversal (RFR). RuvA specifically binds to HJ cruciform DNA, conferring on it an open structure. The RuvB hexamer acts as an ATP-dependent pump, pulling dsDNA into and through the RuvAB complex. HJ branch migration allows RuvC to scan DNA until it finds its consensus sequence, where it cleaves and resolves the cruciform DNA.</text>
</comment>
<comment type="subunit">
    <text evidence="1">Homotetramer. Forms an RuvA(8)-RuvB(12)-Holliday junction (HJ) complex. HJ DNA is sandwiched between 2 RuvA tetramers; dsDNA enters through RuvA and exits via RuvB. An RuvB hexamer assembles on each DNA strand where it exits the tetramer. Each RuvB hexamer is contacted by two RuvA subunits (via domain III) on 2 adjacent RuvB subunits; this complex drives branch migration. In the full resolvosome a probable DNA-RuvA(4)-RuvB(12)-RuvC(2) complex forms which resolves the HJ.</text>
</comment>
<comment type="subcellular location">
    <subcellularLocation>
        <location evidence="1">Cytoplasm</location>
    </subcellularLocation>
</comment>
<comment type="domain">
    <text evidence="1">Has three domains with a flexible linker between the domains II and III and assumes an 'L' shape. Domain III is highly mobile and contacts RuvB.</text>
</comment>
<comment type="similarity">
    <text evidence="1">Belongs to the RuvA family.</text>
</comment>
<evidence type="ECO:0000255" key="1">
    <source>
        <dbReference type="HAMAP-Rule" id="MF_00031"/>
    </source>
</evidence>